<sequence>MRIMGLDVGSKTVGVAISDPLGFTAQGLEIIKIDEEKAEFGFTRLEELVKQYQVEQFVIGLPKNMNNTNGPRVDASITYGNHIEHLFGLPVHYQDERLTTVEAERMLIEQADISRGKRKKVIDKLAAQLILQNYLNRNF</sequence>
<accession>Q1JJH9</accession>
<reference key="1">
    <citation type="journal article" date="2006" name="Proc. Natl. Acad. Sci. U.S.A.">
        <title>Molecular genetic anatomy of inter- and intraserotype variation in the human bacterial pathogen group A Streptococcus.</title>
        <authorList>
            <person name="Beres S.B."/>
            <person name="Richter E.W."/>
            <person name="Nagiec M.J."/>
            <person name="Sumby P."/>
            <person name="Porcella S.F."/>
            <person name="DeLeo F.R."/>
            <person name="Musser J.M."/>
        </authorList>
    </citation>
    <scope>NUCLEOTIDE SEQUENCE [LARGE SCALE GENOMIC DNA]</scope>
    <source>
        <strain>MGAS9429</strain>
    </source>
</reference>
<gene>
    <name type="ordered locus">MGAS9429_Spy1807</name>
</gene>
<name>YQGF_STRPC</name>
<organism>
    <name type="scientific">Streptococcus pyogenes serotype M12 (strain MGAS9429)</name>
    <dbReference type="NCBI Taxonomy" id="370551"/>
    <lineage>
        <taxon>Bacteria</taxon>
        <taxon>Bacillati</taxon>
        <taxon>Bacillota</taxon>
        <taxon>Bacilli</taxon>
        <taxon>Lactobacillales</taxon>
        <taxon>Streptococcaceae</taxon>
        <taxon>Streptococcus</taxon>
    </lineage>
</organism>
<proteinExistence type="inferred from homology"/>
<comment type="function">
    <text evidence="1">Could be a nuclease involved in processing of the 5'-end of pre-16S rRNA.</text>
</comment>
<comment type="subcellular location">
    <subcellularLocation>
        <location evidence="1">Cytoplasm</location>
    </subcellularLocation>
</comment>
<comment type="similarity">
    <text evidence="1">Belongs to the YqgF nuclease family.</text>
</comment>
<feature type="chain" id="PRO_0000257601" description="Putative pre-16S rRNA nuclease">
    <location>
        <begin position="1"/>
        <end position="139"/>
    </location>
</feature>
<dbReference type="EC" id="3.1.-.-" evidence="1"/>
<dbReference type="EMBL" id="CP000259">
    <property type="protein sequence ID" value="ABF32994.1"/>
    <property type="molecule type" value="Genomic_DNA"/>
</dbReference>
<dbReference type="SMR" id="Q1JJH9"/>
<dbReference type="KEGG" id="spk:MGAS9429_Spy1807"/>
<dbReference type="HOGENOM" id="CLU_098240_2_0_9"/>
<dbReference type="Proteomes" id="UP000002433">
    <property type="component" value="Chromosome"/>
</dbReference>
<dbReference type="GO" id="GO:0005829">
    <property type="term" value="C:cytosol"/>
    <property type="evidence" value="ECO:0007669"/>
    <property type="project" value="TreeGrafter"/>
</dbReference>
<dbReference type="GO" id="GO:0004518">
    <property type="term" value="F:nuclease activity"/>
    <property type="evidence" value="ECO:0007669"/>
    <property type="project" value="UniProtKB-KW"/>
</dbReference>
<dbReference type="GO" id="GO:0000967">
    <property type="term" value="P:rRNA 5'-end processing"/>
    <property type="evidence" value="ECO:0007669"/>
    <property type="project" value="UniProtKB-UniRule"/>
</dbReference>
<dbReference type="CDD" id="cd16964">
    <property type="entry name" value="YqgF"/>
    <property type="match status" value="1"/>
</dbReference>
<dbReference type="FunFam" id="3.30.420.140:FF:000003">
    <property type="entry name" value="Putative pre-16S rRNA nuclease"/>
    <property type="match status" value="1"/>
</dbReference>
<dbReference type="Gene3D" id="3.30.420.140">
    <property type="entry name" value="YqgF/RNase H-like domain"/>
    <property type="match status" value="1"/>
</dbReference>
<dbReference type="HAMAP" id="MF_00651">
    <property type="entry name" value="Nuclease_YqgF"/>
    <property type="match status" value="1"/>
</dbReference>
<dbReference type="InterPro" id="IPR012337">
    <property type="entry name" value="RNaseH-like_sf"/>
</dbReference>
<dbReference type="InterPro" id="IPR005227">
    <property type="entry name" value="YqgF"/>
</dbReference>
<dbReference type="InterPro" id="IPR006641">
    <property type="entry name" value="YqgF/RNaseH-like_dom"/>
</dbReference>
<dbReference type="InterPro" id="IPR037027">
    <property type="entry name" value="YqgF/RNaseH-like_dom_sf"/>
</dbReference>
<dbReference type="NCBIfam" id="TIGR00250">
    <property type="entry name" value="RNAse_H_YqgF"/>
    <property type="match status" value="1"/>
</dbReference>
<dbReference type="PANTHER" id="PTHR33317">
    <property type="entry name" value="POLYNUCLEOTIDYL TRANSFERASE, RIBONUCLEASE H-LIKE SUPERFAMILY PROTEIN"/>
    <property type="match status" value="1"/>
</dbReference>
<dbReference type="PANTHER" id="PTHR33317:SF4">
    <property type="entry name" value="POLYNUCLEOTIDYL TRANSFERASE, RIBONUCLEASE H-LIKE SUPERFAMILY PROTEIN"/>
    <property type="match status" value="1"/>
</dbReference>
<dbReference type="Pfam" id="PF03652">
    <property type="entry name" value="RuvX"/>
    <property type="match status" value="1"/>
</dbReference>
<dbReference type="SMART" id="SM00732">
    <property type="entry name" value="YqgFc"/>
    <property type="match status" value="1"/>
</dbReference>
<dbReference type="SUPFAM" id="SSF53098">
    <property type="entry name" value="Ribonuclease H-like"/>
    <property type="match status" value="1"/>
</dbReference>
<keyword id="KW-0963">Cytoplasm</keyword>
<keyword id="KW-0378">Hydrolase</keyword>
<keyword id="KW-0540">Nuclease</keyword>
<keyword id="KW-0690">Ribosome biogenesis</keyword>
<protein>
    <recommendedName>
        <fullName evidence="1">Putative pre-16S rRNA nuclease</fullName>
        <ecNumber evidence="1">3.1.-.-</ecNumber>
    </recommendedName>
</protein>
<evidence type="ECO:0000255" key="1">
    <source>
        <dbReference type="HAMAP-Rule" id="MF_00651"/>
    </source>
</evidence>